<evidence type="ECO:0000305" key="1"/>
<comment type="function">
    <text>This protein catalyzes the penultimate step in bacteriochlorophyll a biosynthesis.</text>
</comment>
<comment type="pathway">
    <text>Porphyrin-containing compound metabolism; bacteriochlorophyll biosynthesis (light-independent).</text>
</comment>
<protein>
    <recommendedName>
        <fullName>2-desacetyl-2-hydroxyethyl bacteriochlorophyllide A dehydrogenase</fullName>
        <ecNumber>1.-.-.-</ecNumber>
    </recommendedName>
</protein>
<sequence>MRTTAVILSGPRDLGLQTIQLNEPAPGDIVVEITHSGISTGTEKLFYTGQMPPFPGMGYPLVPGYEAAGEVVEAAPDTGFRPGDRVFVPGSNCFAPTDAGPIRGLFGAATKRLVTPAHRAVRIDPALEAEGALLALAATARHALAGLNHVLPDLIVGHGTLGRLLARLTIAAGGEPPVVWETKAERRRHAEGYEVIDPATDQRRDYRSIYDASGDPKLIDSLVMRLAKGGEIVLAGFYTEPVAFTFVPAFMKEARLRIAAEWQPEDMVATRALIESGALSLANLITHTRPASEAAEAYATAFSDPDCLKMILDWRATA</sequence>
<gene>
    <name type="primary">bchC</name>
    <name type="ordered locus">RHOS4_18690</name>
    <name type="ORF">RSP_0263</name>
</gene>
<accession>Q02430</accession>
<accession>Q3J197</accession>
<accession>Q9RFC3</accession>
<name>BCHC_CERS4</name>
<dbReference type="EC" id="1.-.-.-"/>
<dbReference type="EMBL" id="AJ010302">
    <property type="protein sequence ID" value="CAB38746.1"/>
    <property type="molecule type" value="Genomic_DNA"/>
</dbReference>
<dbReference type="EMBL" id="AF195122">
    <property type="protein sequence ID" value="AAF24296.1"/>
    <property type="molecule type" value="Genomic_DNA"/>
</dbReference>
<dbReference type="EMBL" id="CP000143">
    <property type="protein sequence ID" value="ABA79437.1"/>
    <property type="molecule type" value="Genomic_DNA"/>
</dbReference>
<dbReference type="PIR" id="S30914">
    <property type="entry name" value="S30914"/>
</dbReference>
<dbReference type="PIR" id="T50752">
    <property type="entry name" value="T50752"/>
</dbReference>
<dbReference type="RefSeq" id="WP_002720428.1">
    <property type="nucleotide sequence ID" value="NZ_CP030271.1"/>
</dbReference>
<dbReference type="RefSeq" id="YP_353338.1">
    <property type="nucleotide sequence ID" value="NC_007493.2"/>
</dbReference>
<dbReference type="SMR" id="Q02430"/>
<dbReference type="STRING" id="272943.RSP_0263"/>
<dbReference type="EnsemblBacteria" id="ABA79437">
    <property type="protein sequence ID" value="ABA79437"/>
    <property type="gene ID" value="RSP_0263"/>
</dbReference>
<dbReference type="GeneID" id="67446997"/>
<dbReference type="KEGG" id="rsp:RSP_0263"/>
<dbReference type="PATRIC" id="fig|272943.9.peg.2207"/>
<dbReference type="eggNOG" id="COG1063">
    <property type="taxonomic scope" value="Bacteria"/>
</dbReference>
<dbReference type="OrthoDB" id="9806940at2"/>
<dbReference type="PhylomeDB" id="Q02430"/>
<dbReference type="BRENDA" id="1.1.1.396">
    <property type="organism ID" value="5383"/>
</dbReference>
<dbReference type="UniPathway" id="UPA00671"/>
<dbReference type="Proteomes" id="UP000002703">
    <property type="component" value="Chromosome 1"/>
</dbReference>
<dbReference type="GO" id="GO:0036354">
    <property type="term" value="F:bacteriochlorophyllide-a dehydrogenase activity"/>
    <property type="evidence" value="ECO:0007669"/>
    <property type="project" value="InterPro"/>
</dbReference>
<dbReference type="GO" id="GO:0036070">
    <property type="term" value="P:light-independent bacteriochlorophyll biosynthetic process"/>
    <property type="evidence" value="ECO:0007669"/>
    <property type="project" value="UniProtKB-UniPathway"/>
</dbReference>
<dbReference type="GO" id="GO:0015979">
    <property type="term" value="P:photosynthesis"/>
    <property type="evidence" value="ECO:0007669"/>
    <property type="project" value="UniProtKB-KW"/>
</dbReference>
<dbReference type="CDD" id="cd08255">
    <property type="entry name" value="2-desacetyl-2-hydroxyethyl_bacteriochlorophyllide_like"/>
    <property type="match status" value="1"/>
</dbReference>
<dbReference type="Gene3D" id="3.90.180.10">
    <property type="entry name" value="Medium-chain alcohol dehydrogenases, catalytic domain"/>
    <property type="match status" value="2"/>
</dbReference>
<dbReference type="Gene3D" id="3.40.50.720">
    <property type="entry name" value="NAD(P)-binding Rossmann-like Domain"/>
    <property type="match status" value="1"/>
</dbReference>
<dbReference type="InterPro" id="IPR013154">
    <property type="entry name" value="ADH-like_N"/>
</dbReference>
<dbReference type="InterPro" id="IPR005903">
    <property type="entry name" value="BchC"/>
</dbReference>
<dbReference type="InterPro" id="IPR011032">
    <property type="entry name" value="GroES-like_sf"/>
</dbReference>
<dbReference type="InterPro" id="IPR036291">
    <property type="entry name" value="NAD(P)-bd_dom_sf"/>
</dbReference>
<dbReference type="NCBIfam" id="TIGR01202">
    <property type="entry name" value="bchC"/>
    <property type="match status" value="1"/>
</dbReference>
<dbReference type="PANTHER" id="PTHR43189:SF1">
    <property type="entry name" value="ZINC-TYPE ALCOHOL DEHYDROGENASE-LIKE PROTEIN C1198.01"/>
    <property type="match status" value="1"/>
</dbReference>
<dbReference type="PANTHER" id="PTHR43189">
    <property type="entry name" value="ZINC-TYPE ALCOHOL DEHYDROGENASE-LIKE PROTEIN C1198.01-RELATED"/>
    <property type="match status" value="1"/>
</dbReference>
<dbReference type="Pfam" id="PF08240">
    <property type="entry name" value="ADH_N"/>
    <property type="match status" value="1"/>
</dbReference>
<dbReference type="SUPFAM" id="SSF50129">
    <property type="entry name" value="GroES-like"/>
    <property type="match status" value="1"/>
</dbReference>
<dbReference type="SUPFAM" id="SSF51735">
    <property type="entry name" value="NAD(P)-binding Rossmann-fold domains"/>
    <property type="match status" value="1"/>
</dbReference>
<reference key="1">
    <citation type="journal article" date="1993" name="Mol. Gen. Genet.">
        <title>Genetic analysis of the bchC and bchA genes of Rhodobacter sphaeroides.</title>
        <authorList>
            <person name="McGlynn P."/>
            <person name="Hunter C.N."/>
        </authorList>
    </citation>
    <scope>NUCLEOTIDE SEQUENCE [GENOMIC DNA]</scope>
</reference>
<reference key="2">
    <citation type="journal article" date="2000" name="Nucleic Acids Res.">
        <title>DNA sequence analysis of the photosynthesis region of Rhodobacter sphaeroides 2.4.1.</title>
        <authorList>
            <person name="Choudhary M."/>
            <person name="Kaplan S."/>
        </authorList>
    </citation>
    <scope>NUCLEOTIDE SEQUENCE [GENOMIC DNA]</scope>
</reference>
<reference key="3">
    <citation type="submission" date="2005-09" db="EMBL/GenBank/DDBJ databases">
        <title>Complete sequence of chromosome 1 of Rhodobacter sphaeroides 2.4.1.</title>
        <authorList>
            <person name="Copeland A."/>
            <person name="Lucas S."/>
            <person name="Lapidus A."/>
            <person name="Barry K."/>
            <person name="Detter J.C."/>
            <person name="Glavina T."/>
            <person name="Hammon N."/>
            <person name="Israni S."/>
            <person name="Pitluck S."/>
            <person name="Richardson P."/>
            <person name="Mackenzie C."/>
            <person name="Choudhary M."/>
            <person name="Larimer F."/>
            <person name="Hauser L.J."/>
            <person name="Land M."/>
            <person name="Donohue T.J."/>
            <person name="Kaplan S."/>
        </authorList>
    </citation>
    <scope>NUCLEOTIDE SEQUENCE [LARGE SCALE GENOMIC DNA]</scope>
    <source>
        <strain>ATCC 17023 / DSM 158 / JCM 6121 / CCUG 31486 / LMG 2827 / NBRC 12203 / NCIMB 8253 / ATH 2.4.1.</strain>
    </source>
</reference>
<keyword id="KW-0077">Bacteriochlorophyll biosynthesis</keyword>
<keyword id="KW-0149">Chlorophyll biosynthesis</keyword>
<keyword id="KW-0560">Oxidoreductase</keyword>
<keyword id="KW-0602">Photosynthesis</keyword>
<keyword id="KW-1185">Reference proteome</keyword>
<feature type="chain" id="PRO_0000064871" description="2-desacetyl-2-hydroxyethyl bacteriochlorophyllide A dehydrogenase">
    <location>
        <begin position="1"/>
        <end position="318"/>
    </location>
</feature>
<feature type="sequence conflict" description="In Ref. 1; CAB38746." evidence="1" ref="1">
    <original>A</original>
    <variation>R</variation>
    <location>
        <position position="278"/>
    </location>
</feature>
<feature type="sequence conflict" description="In Ref. 2; AAF24296." evidence="1" ref="2">
    <original>AF</original>
    <variation>GL</variation>
    <location>
        <begin position="301"/>
        <end position="302"/>
    </location>
</feature>
<proteinExistence type="predicted"/>
<organism>
    <name type="scientific">Cereibacter sphaeroides (strain ATCC 17023 / DSM 158 / JCM 6121 / CCUG 31486 / LMG 2827 / NBRC 12203 / NCIMB 8253 / ATH 2.4.1.)</name>
    <name type="common">Rhodobacter sphaeroides</name>
    <dbReference type="NCBI Taxonomy" id="272943"/>
    <lineage>
        <taxon>Bacteria</taxon>
        <taxon>Pseudomonadati</taxon>
        <taxon>Pseudomonadota</taxon>
        <taxon>Alphaproteobacteria</taxon>
        <taxon>Rhodobacterales</taxon>
        <taxon>Paracoccaceae</taxon>
        <taxon>Cereibacter</taxon>
    </lineage>
</organism>